<gene>
    <name evidence="1" type="primary">uvrC</name>
    <name type="ordered locus">HY04AAS1_1246</name>
</gene>
<feature type="chain" id="PRO_1000200591" description="UvrABC system protein C">
    <location>
        <begin position="1"/>
        <end position="565"/>
    </location>
</feature>
<feature type="domain" description="GIY-YIG" evidence="1">
    <location>
        <begin position="12"/>
        <end position="89"/>
    </location>
</feature>
<feature type="domain" description="UVR" evidence="1">
    <location>
        <begin position="195"/>
        <end position="230"/>
    </location>
</feature>
<dbReference type="EMBL" id="CP001130">
    <property type="protein sequence ID" value="ACG57931.1"/>
    <property type="molecule type" value="Genomic_DNA"/>
</dbReference>
<dbReference type="RefSeq" id="WP_012514287.1">
    <property type="nucleotide sequence ID" value="NC_011126.1"/>
</dbReference>
<dbReference type="SMR" id="B4U9X0"/>
<dbReference type="STRING" id="380749.HY04AAS1_1246"/>
<dbReference type="KEGG" id="hya:HY04AAS1_1246"/>
<dbReference type="eggNOG" id="COG0322">
    <property type="taxonomic scope" value="Bacteria"/>
</dbReference>
<dbReference type="HOGENOM" id="CLU_014841_3_2_0"/>
<dbReference type="OrthoDB" id="9804933at2"/>
<dbReference type="GO" id="GO:0005737">
    <property type="term" value="C:cytoplasm"/>
    <property type="evidence" value="ECO:0007669"/>
    <property type="project" value="UniProtKB-SubCell"/>
</dbReference>
<dbReference type="GO" id="GO:0009380">
    <property type="term" value="C:excinuclease repair complex"/>
    <property type="evidence" value="ECO:0007669"/>
    <property type="project" value="InterPro"/>
</dbReference>
<dbReference type="GO" id="GO:0003677">
    <property type="term" value="F:DNA binding"/>
    <property type="evidence" value="ECO:0007669"/>
    <property type="project" value="UniProtKB-UniRule"/>
</dbReference>
<dbReference type="GO" id="GO:0009381">
    <property type="term" value="F:excinuclease ABC activity"/>
    <property type="evidence" value="ECO:0007669"/>
    <property type="project" value="UniProtKB-UniRule"/>
</dbReference>
<dbReference type="GO" id="GO:0006289">
    <property type="term" value="P:nucleotide-excision repair"/>
    <property type="evidence" value="ECO:0007669"/>
    <property type="project" value="UniProtKB-UniRule"/>
</dbReference>
<dbReference type="GO" id="GO:0009432">
    <property type="term" value="P:SOS response"/>
    <property type="evidence" value="ECO:0007669"/>
    <property type="project" value="UniProtKB-UniRule"/>
</dbReference>
<dbReference type="CDD" id="cd10434">
    <property type="entry name" value="GIY-YIG_UvrC_Cho"/>
    <property type="match status" value="1"/>
</dbReference>
<dbReference type="Gene3D" id="1.10.150.20">
    <property type="entry name" value="5' to 3' exonuclease, C-terminal subdomain"/>
    <property type="match status" value="1"/>
</dbReference>
<dbReference type="Gene3D" id="3.40.1440.10">
    <property type="entry name" value="GIY-YIG endonuclease"/>
    <property type="match status" value="1"/>
</dbReference>
<dbReference type="Gene3D" id="4.10.860.10">
    <property type="entry name" value="UVR domain"/>
    <property type="match status" value="1"/>
</dbReference>
<dbReference type="Gene3D" id="3.30.420.340">
    <property type="entry name" value="UvrC, RNAse H endonuclease domain"/>
    <property type="match status" value="1"/>
</dbReference>
<dbReference type="HAMAP" id="MF_00203">
    <property type="entry name" value="UvrC"/>
    <property type="match status" value="1"/>
</dbReference>
<dbReference type="InterPro" id="IPR000305">
    <property type="entry name" value="GIY-YIG_endonuc"/>
</dbReference>
<dbReference type="InterPro" id="IPR035901">
    <property type="entry name" value="GIY-YIG_endonuc_sf"/>
</dbReference>
<dbReference type="InterPro" id="IPR047296">
    <property type="entry name" value="GIY-YIG_UvrC_Cho"/>
</dbReference>
<dbReference type="InterPro" id="IPR010994">
    <property type="entry name" value="RuvA_2-like"/>
</dbReference>
<dbReference type="InterPro" id="IPR001943">
    <property type="entry name" value="UVR_dom"/>
</dbReference>
<dbReference type="InterPro" id="IPR036876">
    <property type="entry name" value="UVR_dom_sf"/>
</dbReference>
<dbReference type="InterPro" id="IPR050066">
    <property type="entry name" value="UvrABC_protein_C"/>
</dbReference>
<dbReference type="InterPro" id="IPR004791">
    <property type="entry name" value="UvrC"/>
</dbReference>
<dbReference type="InterPro" id="IPR001162">
    <property type="entry name" value="UvrC_RNase_H_dom"/>
</dbReference>
<dbReference type="InterPro" id="IPR038476">
    <property type="entry name" value="UvrC_RNase_H_dom_sf"/>
</dbReference>
<dbReference type="NCBIfam" id="NF011261">
    <property type="entry name" value="PRK14667.1"/>
    <property type="match status" value="1"/>
</dbReference>
<dbReference type="NCBIfam" id="TIGR00194">
    <property type="entry name" value="uvrC"/>
    <property type="match status" value="1"/>
</dbReference>
<dbReference type="PANTHER" id="PTHR30562:SF1">
    <property type="entry name" value="UVRABC SYSTEM PROTEIN C"/>
    <property type="match status" value="1"/>
</dbReference>
<dbReference type="PANTHER" id="PTHR30562">
    <property type="entry name" value="UVRC/OXIDOREDUCTASE"/>
    <property type="match status" value="1"/>
</dbReference>
<dbReference type="Pfam" id="PF01541">
    <property type="entry name" value="GIY-YIG"/>
    <property type="match status" value="1"/>
</dbReference>
<dbReference type="Pfam" id="PF02151">
    <property type="entry name" value="UVR"/>
    <property type="match status" value="1"/>
</dbReference>
<dbReference type="Pfam" id="PF08459">
    <property type="entry name" value="UvrC_RNaseH_dom"/>
    <property type="match status" value="1"/>
</dbReference>
<dbReference type="SMART" id="SM00465">
    <property type="entry name" value="GIYc"/>
    <property type="match status" value="1"/>
</dbReference>
<dbReference type="SUPFAM" id="SSF46600">
    <property type="entry name" value="C-terminal UvrC-binding domain of UvrB"/>
    <property type="match status" value="1"/>
</dbReference>
<dbReference type="SUPFAM" id="SSF82771">
    <property type="entry name" value="GIY-YIG endonuclease"/>
    <property type="match status" value="1"/>
</dbReference>
<dbReference type="SUPFAM" id="SSF47781">
    <property type="entry name" value="RuvA domain 2-like"/>
    <property type="match status" value="1"/>
</dbReference>
<dbReference type="PROSITE" id="PS50164">
    <property type="entry name" value="GIY_YIG"/>
    <property type="match status" value="1"/>
</dbReference>
<dbReference type="PROSITE" id="PS50151">
    <property type="entry name" value="UVR"/>
    <property type="match status" value="1"/>
</dbReference>
<dbReference type="PROSITE" id="PS50165">
    <property type="entry name" value="UVRC"/>
    <property type="match status" value="1"/>
</dbReference>
<name>UVRC_HYDS0</name>
<keyword id="KW-0963">Cytoplasm</keyword>
<keyword id="KW-0227">DNA damage</keyword>
<keyword id="KW-0228">DNA excision</keyword>
<keyword id="KW-0234">DNA repair</keyword>
<keyword id="KW-0267">Excision nuclease</keyword>
<keyword id="KW-0742">SOS response</keyword>
<evidence type="ECO:0000255" key="1">
    <source>
        <dbReference type="HAMAP-Rule" id="MF_00203"/>
    </source>
</evidence>
<sequence length="565" mass="65848">MDIVALIEKAPEEPGVYIFKNQKHYIYIGKAINIKKRLLQHLKEREQSKKEANIFNHSKELEWIVTRNEYEALLLEMDLIRTHKPKYNVLLKHGSGYPVILLTDDEYPTVKITRDTSEKGEAFGPFLNINKALKIKKLIHATFRLRTCEEMPKRPTPCMDYHLGLCSGPCANLISKEDYAISVKSAKAFLSGNVKDVLPTLYEKIEQYASNLAFEKAAFLRDQVLVLQNIVDGQGVFLYDIEEVDVFYLEGYSLWLFIIRNKRLVAHKEFRLNKELIINYEEMLGTYYMSNIVPKKIVANFELTENFRLFIKSKRKDVAFSNNIPKPLLKIIEKNVVLKPDTKEFESEFYKLFGRKAPKLIECFDISHFQGQYTVGSMVVWEDGSLNKSKYRRYRIKTVDYIDDFASLKEVLSRRAKRIVSKEDQTPDMWLIDGGKGQLSMGIEVKEKFLLNIYICSLAKKEEIIYTEDGLEIPIKNHQALYRVFGLLRDEAHRFAITYNRNLRSKEFIKDTLSKIKGVGKVKKEIIYRHFDSLYDFIKSDDEKLKKLGISKSIKESVKKILGDM</sequence>
<reference key="1">
    <citation type="journal article" date="2009" name="J. Bacteriol.">
        <title>Complete and draft genome sequences of six members of the Aquificales.</title>
        <authorList>
            <person name="Reysenbach A.-L."/>
            <person name="Hamamura N."/>
            <person name="Podar M."/>
            <person name="Griffiths E."/>
            <person name="Ferreira S."/>
            <person name="Hochstein R."/>
            <person name="Heidelberg J."/>
            <person name="Johnson J."/>
            <person name="Mead D."/>
            <person name="Pohorille A."/>
            <person name="Sarmiento M."/>
            <person name="Schweighofer K."/>
            <person name="Seshadri R."/>
            <person name="Voytek M.A."/>
        </authorList>
    </citation>
    <scope>NUCLEOTIDE SEQUENCE [LARGE SCALE GENOMIC DNA]</scope>
    <source>
        <strain>Y04AAS1</strain>
    </source>
</reference>
<organism>
    <name type="scientific">Hydrogenobaculum sp. (strain Y04AAS1)</name>
    <dbReference type="NCBI Taxonomy" id="380749"/>
    <lineage>
        <taxon>Bacteria</taxon>
        <taxon>Pseudomonadati</taxon>
        <taxon>Aquificota</taxon>
        <taxon>Aquificia</taxon>
        <taxon>Aquificales</taxon>
        <taxon>Aquificaceae</taxon>
        <taxon>Hydrogenobaculum</taxon>
    </lineage>
</organism>
<protein>
    <recommendedName>
        <fullName evidence="1">UvrABC system protein C</fullName>
        <shortName evidence="1">Protein UvrC</shortName>
    </recommendedName>
    <alternativeName>
        <fullName evidence="1">Excinuclease ABC subunit C</fullName>
    </alternativeName>
</protein>
<proteinExistence type="inferred from homology"/>
<accession>B4U9X0</accession>
<comment type="function">
    <text evidence="1">The UvrABC repair system catalyzes the recognition and processing of DNA lesions. UvrC both incises the 5' and 3' sides of the lesion. The N-terminal half is responsible for the 3' incision and the C-terminal half is responsible for the 5' incision.</text>
</comment>
<comment type="subunit">
    <text evidence="1">Interacts with UvrB in an incision complex.</text>
</comment>
<comment type="subcellular location">
    <subcellularLocation>
        <location evidence="1">Cytoplasm</location>
    </subcellularLocation>
</comment>
<comment type="similarity">
    <text evidence="1">Belongs to the UvrC family.</text>
</comment>